<proteinExistence type="inferred from homology"/>
<keyword id="KW-0687">Ribonucleoprotein</keyword>
<keyword id="KW-0689">Ribosomal protein</keyword>
<keyword id="KW-0694">RNA-binding</keyword>
<keyword id="KW-0699">rRNA-binding</keyword>
<dbReference type="EMBL" id="AM236080">
    <property type="protein sequence ID" value="CAK07275.1"/>
    <property type="molecule type" value="Genomic_DNA"/>
</dbReference>
<dbReference type="RefSeq" id="WP_003547554.1">
    <property type="nucleotide sequence ID" value="NC_008380.1"/>
</dbReference>
<dbReference type="SMR" id="Q1MID5"/>
<dbReference type="EnsemblBacteria" id="CAK07275">
    <property type="protein sequence ID" value="CAK07275"/>
    <property type="gene ID" value="RL1780"/>
</dbReference>
<dbReference type="GeneID" id="84669493"/>
<dbReference type="KEGG" id="rle:RL1780"/>
<dbReference type="eggNOG" id="COG0092">
    <property type="taxonomic scope" value="Bacteria"/>
</dbReference>
<dbReference type="HOGENOM" id="CLU_058591_0_2_5"/>
<dbReference type="Proteomes" id="UP000006575">
    <property type="component" value="Chromosome"/>
</dbReference>
<dbReference type="GO" id="GO:0022627">
    <property type="term" value="C:cytosolic small ribosomal subunit"/>
    <property type="evidence" value="ECO:0007669"/>
    <property type="project" value="TreeGrafter"/>
</dbReference>
<dbReference type="GO" id="GO:0003729">
    <property type="term" value="F:mRNA binding"/>
    <property type="evidence" value="ECO:0007669"/>
    <property type="project" value="UniProtKB-UniRule"/>
</dbReference>
<dbReference type="GO" id="GO:0019843">
    <property type="term" value="F:rRNA binding"/>
    <property type="evidence" value="ECO:0007669"/>
    <property type="project" value="UniProtKB-UniRule"/>
</dbReference>
<dbReference type="GO" id="GO:0003735">
    <property type="term" value="F:structural constituent of ribosome"/>
    <property type="evidence" value="ECO:0007669"/>
    <property type="project" value="InterPro"/>
</dbReference>
<dbReference type="GO" id="GO:0006412">
    <property type="term" value="P:translation"/>
    <property type="evidence" value="ECO:0007669"/>
    <property type="project" value="UniProtKB-UniRule"/>
</dbReference>
<dbReference type="CDD" id="cd02412">
    <property type="entry name" value="KH-II_30S_S3"/>
    <property type="match status" value="1"/>
</dbReference>
<dbReference type="FunFam" id="3.30.1140.32:FF:000001">
    <property type="entry name" value="30S ribosomal protein S3"/>
    <property type="match status" value="1"/>
</dbReference>
<dbReference type="FunFam" id="3.30.300.20:FF:000001">
    <property type="entry name" value="30S ribosomal protein S3"/>
    <property type="match status" value="1"/>
</dbReference>
<dbReference type="Gene3D" id="3.30.300.20">
    <property type="match status" value="1"/>
</dbReference>
<dbReference type="Gene3D" id="3.30.1140.32">
    <property type="entry name" value="Ribosomal protein S3, C-terminal domain"/>
    <property type="match status" value="1"/>
</dbReference>
<dbReference type="HAMAP" id="MF_01309_B">
    <property type="entry name" value="Ribosomal_uS3_B"/>
    <property type="match status" value="1"/>
</dbReference>
<dbReference type="InterPro" id="IPR004087">
    <property type="entry name" value="KH_dom"/>
</dbReference>
<dbReference type="InterPro" id="IPR015946">
    <property type="entry name" value="KH_dom-like_a/b"/>
</dbReference>
<dbReference type="InterPro" id="IPR004044">
    <property type="entry name" value="KH_dom_type_2"/>
</dbReference>
<dbReference type="InterPro" id="IPR009019">
    <property type="entry name" value="KH_sf_prok-type"/>
</dbReference>
<dbReference type="InterPro" id="IPR036419">
    <property type="entry name" value="Ribosomal_S3_C_sf"/>
</dbReference>
<dbReference type="InterPro" id="IPR005704">
    <property type="entry name" value="Ribosomal_uS3_bac-typ"/>
</dbReference>
<dbReference type="InterPro" id="IPR001351">
    <property type="entry name" value="Ribosomal_uS3_C"/>
</dbReference>
<dbReference type="InterPro" id="IPR018280">
    <property type="entry name" value="Ribosomal_uS3_CS"/>
</dbReference>
<dbReference type="NCBIfam" id="TIGR01009">
    <property type="entry name" value="rpsC_bact"/>
    <property type="match status" value="1"/>
</dbReference>
<dbReference type="PANTHER" id="PTHR11760">
    <property type="entry name" value="30S/40S RIBOSOMAL PROTEIN S3"/>
    <property type="match status" value="1"/>
</dbReference>
<dbReference type="PANTHER" id="PTHR11760:SF19">
    <property type="entry name" value="SMALL RIBOSOMAL SUBUNIT PROTEIN US3C"/>
    <property type="match status" value="1"/>
</dbReference>
<dbReference type="Pfam" id="PF07650">
    <property type="entry name" value="KH_2"/>
    <property type="match status" value="1"/>
</dbReference>
<dbReference type="Pfam" id="PF00189">
    <property type="entry name" value="Ribosomal_S3_C"/>
    <property type="match status" value="1"/>
</dbReference>
<dbReference type="SMART" id="SM00322">
    <property type="entry name" value="KH"/>
    <property type="match status" value="1"/>
</dbReference>
<dbReference type="SUPFAM" id="SSF54814">
    <property type="entry name" value="Prokaryotic type KH domain (KH-domain type II)"/>
    <property type="match status" value="1"/>
</dbReference>
<dbReference type="SUPFAM" id="SSF54821">
    <property type="entry name" value="Ribosomal protein S3 C-terminal domain"/>
    <property type="match status" value="1"/>
</dbReference>
<dbReference type="PROSITE" id="PS50823">
    <property type="entry name" value="KH_TYPE_2"/>
    <property type="match status" value="1"/>
</dbReference>
<dbReference type="PROSITE" id="PS00548">
    <property type="entry name" value="RIBOSOMAL_S3"/>
    <property type="match status" value="1"/>
</dbReference>
<organism>
    <name type="scientific">Rhizobium johnstonii (strain DSM 114642 / LMG 32736 / 3841)</name>
    <name type="common">Rhizobium leguminosarum bv. viciae</name>
    <dbReference type="NCBI Taxonomy" id="216596"/>
    <lineage>
        <taxon>Bacteria</taxon>
        <taxon>Pseudomonadati</taxon>
        <taxon>Pseudomonadota</taxon>
        <taxon>Alphaproteobacteria</taxon>
        <taxon>Hyphomicrobiales</taxon>
        <taxon>Rhizobiaceae</taxon>
        <taxon>Rhizobium/Agrobacterium group</taxon>
        <taxon>Rhizobium</taxon>
        <taxon>Rhizobium johnstonii</taxon>
    </lineage>
</organism>
<name>RS3_RHIJ3</name>
<comment type="function">
    <text evidence="1">Binds the lower part of the 30S subunit head. Binds mRNA in the 70S ribosome, positioning it for translation.</text>
</comment>
<comment type="subunit">
    <text evidence="1">Part of the 30S ribosomal subunit. Forms a tight complex with proteins S10 and S14.</text>
</comment>
<comment type="similarity">
    <text evidence="1">Belongs to the universal ribosomal protein uS3 family.</text>
</comment>
<reference key="1">
    <citation type="journal article" date="2006" name="Genome Biol.">
        <title>The genome of Rhizobium leguminosarum has recognizable core and accessory components.</title>
        <authorList>
            <person name="Young J.P.W."/>
            <person name="Crossman L.C."/>
            <person name="Johnston A.W.B."/>
            <person name="Thomson N.R."/>
            <person name="Ghazoui Z.F."/>
            <person name="Hull K.H."/>
            <person name="Wexler M."/>
            <person name="Curson A.R.J."/>
            <person name="Todd J.D."/>
            <person name="Poole P.S."/>
            <person name="Mauchline T.H."/>
            <person name="East A.K."/>
            <person name="Quail M.A."/>
            <person name="Churcher C."/>
            <person name="Arrowsmith C."/>
            <person name="Cherevach I."/>
            <person name="Chillingworth T."/>
            <person name="Clarke K."/>
            <person name="Cronin A."/>
            <person name="Davis P."/>
            <person name="Fraser A."/>
            <person name="Hance Z."/>
            <person name="Hauser H."/>
            <person name="Jagels K."/>
            <person name="Moule S."/>
            <person name="Mungall K."/>
            <person name="Norbertczak H."/>
            <person name="Rabbinowitsch E."/>
            <person name="Sanders M."/>
            <person name="Simmonds M."/>
            <person name="Whitehead S."/>
            <person name="Parkhill J."/>
        </authorList>
    </citation>
    <scope>NUCLEOTIDE SEQUENCE [LARGE SCALE GENOMIC DNA]</scope>
    <source>
        <strain>DSM 114642 / LMG 32736 / 3841</strain>
    </source>
</reference>
<sequence>MGQKINPIGFRLGINRTWDSRWFADNAEYGQLLHEDLKMRKFVMSELKQAGISKVVIERPHKKCRVTIHSARPGLIIGRKGADIDKLRKKLSEMTNSETHLNIVEVRKPEVDATLVAQSIAQQLERRVAFRRAMKRAVQSAMRLGAEGIKITCAGRLGGAEIARTEWYREGRVPLHTLRADIDYGTAEAETAFGICGIKVWIFKGEILEHDPMASERRAMEGDAQGPASRDRDRDRDRRRDNA</sequence>
<accession>Q1MID5</accession>
<evidence type="ECO:0000255" key="1">
    <source>
        <dbReference type="HAMAP-Rule" id="MF_01309"/>
    </source>
</evidence>
<evidence type="ECO:0000256" key="2">
    <source>
        <dbReference type="SAM" id="MobiDB-lite"/>
    </source>
</evidence>
<evidence type="ECO:0000305" key="3"/>
<gene>
    <name evidence="1" type="primary">rpsC</name>
    <name type="ordered locus">RL1780</name>
</gene>
<feature type="chain" id="PRO_0000293864" description="Small ribosomal subunit protein uS3">
    <location>
        <begin position="1"/>
        <end position="243"/>
    </location>
</feature>
<feature type="domain" description="KH type-2" evidence="1">
    <location>
        <begin position="39"/>
        <end position="107"/>
    </location>
</feature>
<feature type="region of interest" description="Disordered" evidence="2">
    <location>
        <begin position="214"/>
        <end position="243"/>
    </location>
</feature>
<feature type="compositionally biased region" description="Basic and acidic residues" evidence="2">
    <location>
        <begin position="229"/>
        <end position="243"/>
    </location>
</feature>
<protein>
    <recommendedName>
        <fullName evidence="1">Small ribosomal subunit protein uS3</fullName>
    </recommendedName>
    <alternativeName>
        <fullName evidence="3">30S ribosomal protein S3</fullName>
    </alternativeName>
</protein>